<sequence length="441" mass="49582">MSKVTPQPKIGFVSLGCPKNLVDSERILTELRTEGYDVVPSYDDADMVIVNTCGFIDSAVQESLEAIGEALNENGKVIVTGCLGAKEDQIREVHPKVLEITGPHSYEQVLEHVHHYVPKPKHNPFLSLVPEQGVKLTPRHYAYLKISEGCNHRCTFCIIPSMRGDLVSRPIGEVLSEAKRLVDAGVKEILVISQDTSAYGVDVKHRTGFHNGEPVKTSMVSLCEQLSKLGIWTRLHYVYPYPHVDDVIPLMAEGKILPYLDIPLQHASPRILKLMKRPGSVDRQLARIKQWREICPELTLRSTFIVGFPGETEEDFQMLLDFLKEARLDRVGCFKYSPVEGADANALPDQVPEEVKEERWNRFMQLQQQISAERLQEKVGREILVIIDEVDEEGAIGRSMADAPEIDGAVYLNGETNVKPGDILRVKVEHADEYDLWGSRV</sequence>
<dbReference type="EC" id="2.8.4.4" evidence="1"/>
<dbReference type="EMBL" id="CP000948">
    <property type="protein sequence ID" value="ACB02036.1"/>
    <property type="molecule type" value="Genomic_DNA"/>
</dbReference>
<dbReference type="RefSeq" id="WP_000049367.1">
    <property type="nucleotide sequence ID" value="NC_010473.1"/>
</dbReference>
<dbReference type="SMR" id="B1X7X6"/>
<dbReference type="GeneID" id="75204700"/>
<dbReference type="KEGG" id="ecd:ECDH10B_0904"/>
<dbReference type="HOGENOM" id="CLU_018697_0_0_6"/>
<dbReference type="GO" id="GO:0005829">
    <property type="term" value="C:cytosol"/>
    <property type="evidence" value="ECO:0007669"/>
    <property type="project" value="TreeGrafter"/>
</dbReference>
<dbReference type="GO" id="GO:0051539">
    <property type="term" value="F:4 iron, 4 sulfur cluster binding"/>
    <property type="evidence" value="ECO:0007669"/>
    <property type="project" value="UniProtKB-UniRule"/>
</dbReference>
<dbReference type="GO" id="GO:0035599">
    <property type="term" value="F:aspartic acid methylthiotransferase activity"/>
    <property type="evidence" value="ECO:0007669"/>
    <property type="project" value="TreeGrafter"/>
</dbReference>
<dbReference type="GO" id="GO:0046872">
    <property type="term" value="F:metal ion binding"/>
    <property type="evidence" value="ECO:0007669"/>
    <property type="project" value="UniProtKB-KW"/>
</dbReference>
<dbReference type="GO" id="GO:0103039">
    <property type="term" value="F:protein methylthiotransferase activity"/>
    <property type="evidence" value="ECO:0007669"/>
    <property type="project" value="UniProtKB-EC"/>
</dbReference>
<dbReference type="GO" id="GO:0006400">
    <property type="term" value="P:tRNA modification"/>
    <property type="evidence" value="ECO:0007669"/>
    <property type="project" value="InterPro"/>
</dbReference>
<dbReference type="CDD" id="cd01335">
    <property type="entry name" value="Radical_SAM"/>
    <property type="match status" value="1"/>
</dbReference>
<dbReference type="FunFam" id="2.40.50.140:FF:000060">
    <property type="entry name" value="Ribosomal protein S12 methylthiotransferase RimO"/>
    <property type="match status" value="1"/>
</dbReference>
<dbReference type="FunFam" id="3.40.50.12160:FF:000002">
    <property type="entry name" value="Ribosomal protein S12 methylthiotransferase RimO"/>
    <property type="match status" value="1"/>
</dbReference>
<dbReference type="FunFam" id="3.80.30.20:FF:000001">
    <property type="entry name" value="tRNA-2-methylthio-N(6)-dimethylallyladenosine synthase 2"/>
    <property type="match status" value="1"/>
</dbReference>
<dbReference type="Gene3D" id="3.40.50.12160">
    <property type="entry name" value="Methylthiotransferase, N-terminal domain"/>
    <property type="match status" value="1"/>
</dbReference>
<dbReference type="Gene3D" id="2.40.50.140">
    <property type="entry name" value="Nucleic acid-binding proteins"/>
    <property type="match status" value="1"/>
</dbReference>
<dbReference type="Gene3D" id="3.80.30.20">
    <property type="entry name" value="tm_1862 like domain"/>
    <property type="match status" value="1"/>
</dbReference>
<dbReference type="HAMAP" id="MF_01865">
    <property type="entry name" value="MTTase_RimO"/>
    <property type="match status" value="1"/>
</dbReference>
<dbReference type="InterPro" id="IPR006638">
    <property type="entry name" value="Elp3/MiaA/NifB-like_rSAM"/>
</dbReference>
<dbReference type="InterPro" id="IPR005839">
    <property type="entry name" value="Methylthiotransferase"/>
</dbReference>
<dbReference type="InterPro" id="IPR020612">
    <property type="entry name" value="Methylthiotransferase_CS"/>
</dbReference>
<dbReference type="InterPro" id="IPR013848">
    <property type="entry name" value="Methylthiotransferase_N"/>
</dbReference>
<dbReference type="InterPro" id="IPR038135">
    <property type="entry name" value="Methylthiotransferase_N_sf"/>
</dbReference>
<dbReference type="InterPro" id="IPR012340">
    <property type="entry name" value="NA-bd_OB-fold"/>
</dbReference>
<dbReference type="InterPro" id="IPR005840">
    <property type="entry name" value="Ribosomal_uS12_MeSTrfase_RimO"/>
</dbReference>
<dbReference type="InterPro" id="IPR007197">
    <property type="entry name" value="rSAM"/>
</dbReference>
<dbReference type="InterPro" id="IPR023404">
    <property type="entry name" value="rSAM_horseshoe"/>
</dbReference>
<dbReference type="InterPro" id="IPR002792">
    <property type="entry name" value="TRAM_dom"/>
</dbReference>
<dbReference type="NCBIfam" id="TIGR01125">
    <property type="entry name" value="30S ribosomal protein S12 methylthiotransferase RimO"/>
    <property type="match status" value="1"/>
</dbReference>
<dbReference type="NCBIfam" id="TIGR00089">
    <property type="entry name" value="MiaB/RimO family radical SAM methylthiotransferase"/>
    <property type="match status" value="1"/>
</dbReference>
<dbReference type="PANTHER" id="PTHR43837">
    <property type="entry name" value="RIBOSOMAL PROTEIN S12 METHYLTHIOTRANSFERASE RIMO"/>
    <property type="match status" value="1"/>
</dbReference>
<dbReference type="PANTHER" id="PTHR43837:SF1">
    <property type="entry name" value="RIBOSOMAL PROTEIN US12 METHYLTHIOTRANSFERASE RIMO"/>
    <property type="match status" value="1"/>
</dbReference>
<dbReference type="Pfam" id="PF04055">
    <property type="entry name" value="Radical_SAM"/>
    <property type="match status" value="1"/>
</dbReference>
<dbReference type="Pfam" id="PF18693">
    <property type="entry name" value="TRAM_2"/>
    <property type="match status" value="1"/>
</dbReference>
<dbReference type="Pfam" id="PF00919">
    <property type="entry name" value="UPF0004"/>
    <property type="match status" value="1"/>
</dbReference>
<dbReference type="SFLD" id="SFLDG01082">
    <property type="entry name" value="B12-binding_domain_containing"/>
    <property type="match status" value="1"/>
</dbReference>
<dbReference type="SFLD" id="SFLDS00029">
    <property type="entry name" value="Radical_SAM"/>
    <property type="match status" value="1"/>
</dbReference>
<dbReference type="SFLD" id="SFLDF00274">
    <property type="entry name" value="ribosomal_protein_S12_methylth"/>
    <property type="match status" value="1"/>
</dbReference>
<dbReference type="SMART" id="SM00729">
    <property type="entry name" value="Elp3"/>
    <property type="match status" value="1"/>
</dbReference>
<dbReference type="SUPFAM" id="SSF102114">
    <property type="entry name" value="Radical SAM enzymes"/>
    <property type="match status" value="1"/>
</dbReference>
<dbReference type="PROSITE" id="PS51449">
    <property type="entry name" value="MTTASE_N"/>
    <property type="match status" value="1"/>
</dbReference>
<dbReference type="PROSITE" id="PS01278">
    <property type="entry name" value="MTTASE_RADICAL"/>
    <property type="match status" value="1"/>
</dbReference>
<dbReference type="PROSITE" id="PS51918">
    <property type="entry name" value="RADICAL_SAM"/>
    <property type="match status" value="1"/>
</dbReference>
<dbReference type="PROSITE" id="PS50926">
    <property type="entry name" value="TRAM"/>
    <property type="match status" value="1"/>
</dbReference>
<keyword id="KW-0004">4Fe-4S</keyword>
<keyword id="KW-0963">Cytoplasm</keyword>
<keyword id="KW-0408">Iron</keyword>
<keyword id="KW-0411">Iron-sulfur</keyword>
<keyword id="KW-0479">Metal-binding</keyword>
<keyword id="KW-0949">S-adenosyl-L-methionine</keyword>
<keyword id="KW-0808">Transferase</keyword>
<feature type="chain" id="PRO_0000374818" description="Ribosomal protein uS12 methylthiotransferase RimO">
    <location>
        <begin position="1"/>
        <end position="441"/>
    </location>
</feature>
<feature type="domain" description="MTTase N-terminal" evidence="1">
    <location>
        <begin position="8"/>
        <end position="118"/>
    </location>
</feature>
<feature type="domain" description="Radical SAM core" evidence="2">
    <location>
        <begin position="136"/>
        <end position="373"/>
    </location>
</feature>
<feature type="domain" description="TRAM" evidence="1">
    <location>
        <begin position="376"/>
        <end position="441"/>
    </location>
</feature>
<feature type="binding site" evidence="1">
    <location>
        <position position="17"/>
    </location>
    <ligand>
        <name>[4Fe-4S] cluster</name>
        <dbReference type="ChEBI" id="CHEBI:49883"/>
        <label>1</label>
    </ligand>
</feature>
<feature type="binding site" evidence="1">
    <location>
        <position position="53"/>
    </location>
    <ligand>
        <name>[4Fe-4S] cluster</name>
        <dbReference type="ChEBI" id="CHEBI:49883"/>
        <label>1</label>
    </ligand>
</feature>
<feature type="binding site" evidence="1">
    <location>
        <position position="82"/>
    </location>
    <ligand>
        <name>[4Fe-4S] cluster</name>
        <dbReference type="ChEBI" id="CHEBI:49883"/>
        <label>1</label>
    </ligand>
</feature>
<feature type="binding site" evidence="1">
    <location>
        <position position="150"/>
    </location>
    <ligand>
        <name>[4Fe-4S] cluster</name>
        <dbReference type="ChEBI" id="CHEBI:49883"/>
        <label>2</label>
        <note>4Fe-4S-S-AdoMet</note>
    </ligand>
</feature>
<feature type="binding site" evidence="1">
    <location>
        <position position="154"/>
    </location>
    <ligand>
        <name>[4Fe-4S] cluster</name>
        <dbReference type="ChEBI" id="CHEBI:49883"/>
        <label>2</label>
        <note>4Fe-4S-S-AdoMet</note>
    </ligand>
</feature>
<feature type="binding site" evidence="1">
    <location>
        <position position="157"/>
    </location>
    <ligand>
        <name>[4Fe-4S] cluster</name>
        <dbReference type="ChEBI" id="CHEBI:49883"/>
        <label>2</label>
        <note>4Fe-4S-S-AdoMet</note>
    </ligand>
</feature>
<proteinExistence type="inferred from homology"/>
<comment type="function">
    <text evidence="1">Catalyzes the methylthiolation of an aspartic acid residue of ribosomal protein uS12.</text>
</comment>
<comment type="catalytic activity">
    <reaction evidence="1">
        <text>L-aspartate(89)-[ribosomal protein uS12]-hydrogen + (sulfur carrier)-SH + AH2 + 2 S-adenosyl-L-methionine = 3-methylsulfanyl-L-aspartate(89)-[ribosomal protein uS12]-hydrogen + (sulfur carrier)-H + 5'-deoxyadenosine + L-methionine + A + S-adenosyl-L-homocysteine + 2 H(+)</text>
        <dbReference type="Rhea" id="RHEA:37087"/>
        <dbReference type="Rhea" id="RHEA-COMP:10460"/>
        <dbReference type="Rhea" id="RHEA-COMP:10461"/>
        <dbReference type="Rhea" id="RHEA-COMP:14737"/>
        <dbReference type="Rhea" id="RHEA-COMP:14739"/>
        <dbReference type="ChEBI" id="CHEBI:13193"/>
        <dbReference type="ChEBI" id="CHEBI:15378"/>
        <dbReference type="ChEBI" id="CHEBI:17319"/>
        <dbReference type="ChEBI" id="CHEBI:17499"/>
        <dbReference type="ChEBI" id="CHEBI:29917"/>
        <dbReference type="ChEBI" id="CHEBI:29961"/>
        <dbReference type="ChEBI" id="CHEBI:57844"/>
        <dbReference type="ChEBI" id="CHEBI:57856"/>
        <dbReference type="ChEBI" id="CHEBI:59789"/>
        <dbReference type="ChEBI" id="CHEBI:64428"/>
        <dbReference type="ChEBI" id="CHEBI:73599"/>
        <dbReference type="EC" id="2.8.4.4"/>
    </reaction>
</comment>
<comment type="cofactor">
    <cofactor evidence="1">
        <name>[4Fe-4S] cluster</name>
        <dbReference type="ChEBI" id="CHEBI:49883"/>
    </cofactor>
    <text evidence="1">Binds 2 [4Fe-4S] clusters. One cluster is coordinated with 3 cysteines and an exchangeable S-adenosyl-L-methionine.</text>
</comment>
<comment type="subcellular location">
    <subcellularLocation>
        <location evidence="1">Cytoplasm</location>
    </subcellularLocation>
</comment>
<comment type="similarity">
    <text evidence="1">Belongs to the methylthiotransferase family. RimO subfamily.</text>
</comment>
<accession>B1X7X6</accession>
<protein>
    <recommendedName>
        <fullName evidence="1">Ribosomal protein uS12 methylthiotransferase RimO</fullName>
        <shortName evidence="1">uS12 MTTase</shortName>
        <shortName evidence="1">uS12 methylthiotransferase</shortName>
        <ecNumber evidence="1">2.8.4.4</ecNumber>
    </recommendedName>
    <alternativeName>
        <fullName evidence="1">Ribosomal protein uS12 (aspartate-C(3))-methylthiotransferase</fullName>
    </alternativeName>
    <alternativeName>
        <fullName evidence="1">Ribosome maturation factor RimO</fullName>
    </alternativeName>
</protein>
<evidence type="ECO:0000255" key="1">
    <source>
        <dbReference type="HAMAP-Rule" id="MF_01865"/>
    </source>
</evidence>
<evidence type="ECO:0000255" key="2">
    <source>
        <dbReference type="PROSITE-ProRule" id="PRU01266"/>
    </source>
</evidence>
<organism>
    <name type="scientific">Escherichia coli (strain K12 / DH10B)</name>
    <dbReference type="NCBI Taxonomy" id="316385"/>
    <lineage>
        <taxon>Bacteria</taxon>
        <taxon>Pseudomonadati</taxon>
        <taxon>Pseudomonadota</taxon>
        <taxon>Gammaproteobacteria</taxon>
        <taxon>Enterobacterales</taxon>
        <taxon>Enterobacteriaceae</taxon>
        <taxon>Escherichia</taxon>
    </lineage>
</organism>
<gene>
    <name evidence="1" type="primary">rimO</name>
    <name type="ordered locus">ECDH10B_0904</name>
</gene>
<reference key="1">
    <citation type="journal article" date="2008" name="J. Bacteriol.">
        <title>The complete genome sequence of Escherichia coli DH10B: insights into the biology of a laboratory workhorse.</title>
        <authorList>
            <person name="Durfee T."/>
            <person name="Nelson R."/>
            <person name="Baldwin S."/>
            <person name="Plunkett G. III"/>
            <person name="Burland V."/>
            <person name="Mau B."/>
            <person name="Petrosino J.F."/>
            <person name="Qin X."/>
            <person name="Muzny D.M."/>
            <person name="Ayele M."/>
            <person name="Gibbs R.A."/>
            <person name="Csorgo B."/>
            <person name="Posfai G."/>
            <person name="Weinstock G.M."/>
            <person name="Blattner F.R."/>
        </authorList>
    </citation>
    <scope>NUCLEOTIDE SEQUENCE [LARGE SCALE GENOMIC DNA]</scope>
    <source>
        <strain>K12 / DH10B</strain>
    </source>
</reference>
<name>RIMO_ECODH</name>